<keyword id="KW-1185">Reference proteome</keyword>
<gene>
    <name type="ordered locus">PG_1544</name>
</gene>
<reference key="1">
    <citation type="journal article" date="2003" name="J. Bacteriol.">
        <title>Complete genome sequence of the oral pathogenic bacterium Porphyromonas gingivalis strain W83.</title>
        <authorList>
            <person name="Nelson K.E."/>
            <person name="Fleischmann R.D."/>
            <person name="DeBoy R.T."/>
            <person name="Paulsen I.T."/>
            <person name="Fouts D.E."/>
            <person name="Eisen J.A."/>
            <person name="Daugherty S.C."/>
            <person name="Dodson R.J."/>
            <person name="Durkin A.S."/>
            <person name="Gwinn M.L."/>
            <person name="Haft D.H."/>
            <person name="Kolonay J.F."/>
            <person name="Nelson W.C."/>
            <person name="Mason T.M."/>
            <person name="Tallon L."/>
            <person name="Gray J."/>
            <person name="Granger D."/>
            <person name="Tettelin H."/>
            <person name="Dong H."/>
            <person name="Galvin J.L."/>
            <person name="Duncan M.J."/>
            <person name="Dewhirst F.E."/>
            <person name="Fraser C.M."/>
        </authorList>
    </citation>
    <scope>NUCLEOTIDE SEQUENCE [LARGE SCALE GENOMIC DNA]</scope>
    <source>
        <strain>ATCC BAA-308 / W83</strain>
    </source>
</reference>
<organism>
    <name type="scientific">Porphyromonas gingivalis (strain ATCC BAA-308 / W83)</name>
    <dbReference type="NCBI Taxonomy" id="242619"/>
    <lineage>
        <taxon>Bacteria</taxon>
        <taxon>Pseudomonadati</taxon>
        <taxon>Bacteroidota</taxon>
        <taxon>Bacteroidia</taxon>
        <taxon>Bacteroidales</taxon>
        <taxon>Porphyromonadaceae</taxon>
        <taxon>Porphyromonas</taxon>
    </lineage>
</organism>
<sequence length="256" mass="29594">MLILLSCAKTIGIPKRLPSHLTTTSPIFDEQTTKIALAASSCDIKELSRLLRINRKLAEENHRRWQHFFEDDSPTAPAALAYTGMVFKKLAPANFNADDWLYASEHLLITSFLYGLLRPSDMIRPYRMEGFAHLGAPVEDEVFNFWRPYLTDFLIEKVREKGGELCFLASEEMKMLFDWKRVEQAVRVVTPLFKVPQPDGGLKQIVIYTKMARGLMTAHLLTRRCRHVEEMQLFSPEGFIFRPELSDESNYLFVME</sequence>
<protein>
    <recommendedName>
        <fullName evidence="1">UPF0246 protein PG_1544</fullName>
    </recommendedName>
</protein>
<dbReference type="EMBL" id="AE015924">
    <property type="protein sequence ID" value="AAQ66582.1"/>
    <property type="molecule type" value="Genomic_DNA"/>
</dbReference>
<dbReference type="RefSeq" id="WP_005874675.1">
    <property type="nucleotide sequence ID" value="NC_002950.2"/>
</dbReference>
<dbReference type="SMR" id="Q7MUH3"/>
<dbReference type="STRING" id="242619.PG_1544"/>
<dbReference type="EnsemblBacteria" id="AAQ66582">
    <property type="protein sequence ID" value="AAQ66582"/>
    <property type="gene ID" value="PG_1544"/>
</dbReference>
<dbReference type="KEGG" id="pgi:PG_1544"/>
<dbReference type="PATRIC" id="fig|242619.8.peg.1434"/>
<dbReference type="eggNOG" id="COG3022">
    <property type="taxonomic scope" value="Bacteria"/>
</dbReference>
<dbReference type="HOGENOM" id="CLU_061989_0_1_10"/>
<dbReference type="BioCyc" id="PGIN242619:G1G02-1446-MONOMER"/>
<dbReference type="Proteomes" id="UP000000588">
    <property type="component" value="Chromosome"/>
</dbReference>
<dbReference type="GO" id="GO:0005829">
    <property type="term" value="C:cytosol"/>
    <property type="evidence" value="ECO:0007669"/>
    <property type="project" value="TreeGrafter"/>
</dbReference>
<dbReference type="GO" id="GO:0033194">
    <property type="term" value="P:response to hydroperoxide"/>
    <property type="evidence" value="ECO:0007669"/>
    <property type="project" value="TreeGrafter"/>
</dbReference>
<dbReference type="HAMAP" id="MF_00652">
    <property type="entry name" value="UPF0246"/>
    <property type="match status" value="1"/>
</dbReference>
<dbReference type="InterPro" id="IPR005583">
    <property type="entry name" value="YaaA"/>
</dbReference>
<dbReference type="NCBIfam" id="NF002547">
    <property type="entry name" value="PRK02101.2-5"/>
    <property type="match status" value="1"/>
</dbReference>
<dbReference type="PANTHER" id="PTHR30283:SF4">
    <property type="entry name" value="PEROXIDE STRESS RESISTANCE PROTEIN YAAA"/>
    <property type="match status" value="1"/>
</dbReference>
<dbReference type="PANTHER" id="PTHR30283">
    <property type="entry name" value="PEROXIDE STRESS RESPONSE PROTEIN YAAA"/>
    <property type="match status" value="1"/>
</dbReference>
<dbReference type="Pfam" id="PF03883">
    <property type="entry name" value="H2O2_YaaD"/>
    <property type="match status" value="1"/>
</dbReference>
<evidence type="ECO:0000255" key="1">
    <source>
        <dbReference type="HAMAP-Rule" id="MF_00652"/>
    </source>
</evidence>
<comment type="similarity">
    <text evidence="1">Belongs to the UPF0246 family.</text>
</comment>
<accession>Q7MUH3</accession>
<feature type="chain" id="PRO_0000203994" description="UPF0246 protein PG_1544">
    <location>
        <begin position="1"/>
        <end position="256"/>
    </location>
</feature>
<name>Y1544_PORGI</name>
<proteinExistence type="inferred from homology"/>